<name>DAD2_SCHPO</name>
<evidence type="ECO:0000250" key="1">
    <source>
        <dbReference type="UniProtKB" id="P36162"/>
    </source>
</evidence>
<evidence type="ECO:0000255" key="2"/>
<evidence type="ECO:0000256" key="3">
    <source>
        <dbReference type="SAM" id="MobiDB-lite"/>
    </source>
</evidence>
<evidence type="ECO:0000269" key="4">
    <source>
    </source>
</evidence>
<evidence type="ECO:0000269" key="5">
    <source>
    </source>
</evidence>
<evidence type="ECO:0000269" key="6">
    <source>
    </source>
</evidence>
<evidence type="ECO:0000269" key="7">
    <source>
    </source>
</evidence>
<evidence type="ECO:0000269" key="8">
    <source>
    </source>
</evidence>
<evidence type="ECO:0000303" key="9">
    <source>
    </source>
</evidence>
<evidence type="ECO:0000305" key="10"/>
<evidence type="ECO:0000305" key="11">
    <source>
    </source>
</evidence>
<evidence type="ECO:0000312" key="12">
    <source>
        <dbReference type="PomBase" id="SPAC1805.07c"/>
    </source>
</evidence>
<organism>
    <name type="scientific">Schizosaccharomyces pombe (strain 972 / ATCC 24843)</name>
    <name type="common">Fission yeast</name>
    <dbReference type="NCBI Taxonomy" id="284812"/>
    <lineage>
        <taxon>Eukaryota</taxon>
        <taxon>Fungi</taxon>
        <taxon>Dikarya</taxon>
        <taxon>Ascomycota</taxon>
        <taxon>Taphrinomycotina</taxon>
        <taxon>Schizosaccharomycetes</taxon>
        <taxon>Schizosaccharomycetales</taxon>
        <taxon>Schizosaccharomycetaceae</taxon>
        <taxon>Schizosaccharomyces</taxon>
    </lineage>
</organism>
<dbReference type="EMBL" id="CU329670">
    <property type="protein sequence ID" value="CAB55848.1"/>
    <property type="molecule type" value="Genomic_DNA"/>
</dbReference>
<dbReference type="PIR" id="T37892">
    <property type="entry name" value="T37892"/>
</dbReference>
<dbReference type="RefSeq" id="NP_593918.1">
    <property type="nucleotide sequence ID" value="NM_001019347.2"/>
</dbReference>
<dbReference type="SMR" id="Q9UTG8"/>
<dbReference type="BioGRID" id="278881">
    <property type="interactions" value="365"/>
</dbReference>
<dbReference type="ComplexPortal" id="CPX-10081">
    <property type="entry name" value="DASH complex"/>
</dbReference>
<dbReference type="FunCoup" id="Q9UTG8">
    <property type="interactions" value="3"/>
</dbReference>
<dbReference type="STRING" id="284812.Q9UTG8"/>
<dbReference type="PaxDb" id="4896-SPAC1805.07c.1"/>
<dbReference type="EnsemblFungi" id="SPAC1805.07c.1">
    <property type="protein sequence ID" value="SPAC1805.07c.1:pep"/>
    <property type="gene ID" value="SPAC1805.07c"/>
</dbReference>
<dbReference type="GeneID" id="2542418"/>
<dbReference type="KEGG" id="spo:2542418"/>
<dbReference type="PomBase" id="SPAC1805.07c">
    <property type="gene designation" value="dad2"/>
</dbReference>
<dbReference type="VEuPathDB" id="FungiDB:SPAC1805.07c"/>
<dbReference type="eggNOG" id="ENOG502SG7I">
    <property type="taxonomic scope" value="Eukaryota"/>
</dbReference>
<dbReference type="HOGENOM" id="CLU_138063_5_0_1"/>
<dbReference type="InParanoid" id="Q9UTG8"/>
<dbReference type="OMA" id="MTHPTIN"/>
<dbReference type="PhylomeDB" id="Q9UTG8"/>
<dbReference type="PRO" id="PR:Q9UTG8"/>
<dbReference type="Proteomes" id="UP000002485">
    <property type="component" value="Chromosome I"/>
</dbReference>
<dbReference type="GO" id="GO:0000779">
    <property type="term" value="C:condensed chromosome, centromeric region"/>
    <property type="evidence" value="ECO:0000314"/>
    <property type="project" value="PomBase"/>
</dbReference>
<dbReference type="GO" id="GO:0005829">
    <property type="term" value="C:cytosol"/>
    <property type="evidence" value="ECO:0007005"/>
    <property type="project" value="PomBase"/>
</dbReference>
<dbReference type="GO" id="GO:0042729">
    <property type="term" value="C:DASH complex"/>
    <property type="evidence" value="ECO:0000314"/>
    <property type="project" value="PomBase"/>
</dbReference>
<dbReference type="GO" id="GO:0000776">
    <property type="term" value="C:kinetochore"/>
    <property type="evidence" value="ECO:0000314"/>
    <property type="project" value="PomBase"/>
</dbReference>
<dbReference type="GO" id="GO:0005874">
    <property type="term" value="C:microtubule"/>
    <property type="evidence" value="ECO:0007669"/>
    <property type="project" value="UniProtKB-KW"/>
</dbReference>
<dbReference type="GO" id="GO:1990023">
    <property type="term" value="C:mitotic spindle midzone"/>
    <property type="evidence" value="ECO:0000314"/>
    <property type="project" value="PomBase"/>
</dbReference>
<dbReference type="GO" id="GO:0044732">
    <property type="term" value="C:mitotic spindle pole body"/>
    <property type="evidence" value="ECO:0000314"/>
    <property type="project" value="PomBase"/>
</dbReference>
<dbReference type="GO" id="GO:0005634">
    <property type="term" value="C:nucleus"/>
    <property type="evidence" value="ECO:0007005"/>
    <property type="project" value="PomBase"/>
</dbReference>
<dbReference type="GO" id="GO:0008608">
    <property type="term" value="P:attachment of spindle microtubules to kinetochore"/>
    <property type="evidence" value="ECO:0000250"/>
    <property type="project" value="UniProtKB"/>
</dbReference>
<dbReference type="GO" id="GO:0051301">
    <property type="term" value="P:cell division"/>
    <property type="evidence" value="ECO:0007669"/>
    <property type="project" value="UniProtKB-KW"/>
</dbReference>
<dbReference type="GO" id="GO:1990758">
    <property type="term" value="P:mitotic sister chromatid biorientation"/>
    <property type="evidence" value="ECO:0000269"/>
    <property type="project" value="UniProtKB"/>
</dbReference>
<dbReference type="GO" id="GO:1990976">
    <property type="term" value="P:protein transport along microtubule to mitotic spindle pole body"/>
    <property type="evidence" value="ECO:0000250"/>
    <property type="project" value="UniProtKB"/>
</dbReference>
<dbReference type="GO" id="GO:0051455">
    <property type="term" value="P:spindle attachment to meiosis I kinetochore"/>
    <property type="evidence" value="ECO:0000305"/>
    <property type="project" value="PomBase"/>
</dbReference>
<dbReference type="InterPro" id="IPR013963">
    <property type="entry name" value="DASH_Dad2"/>
</dbReference>
<dbReference type="PANTHER" id="PTHR28036">
    <property type="entry name" value="DASH COMPLEX SUBUNIT DAD2"/>
    <property type="match status" value="1"/>
</dbReference>
<dbReference type="PANTHER" id="PTHR28036:SF1">
    <property type="entry name" value="DASH COMPLEX SUBUNIT DAD2"/>
    <property type="match status" value="1"/>
</dbReference>
<dbReference type="Pfam" id="PF08654">
    <property type="entry name" value="DASH_Dad2"/>
    <property type="match status" value="1"/>
</dbReference>
<protein>
    <recommendedName>
        <fullName>DASH complex subunit dad2</fullName>
    </recommendedName>
    <alternativeName>
        <fullName>High osmolarity sensitivity protein 2</fullName>
    </alternativeName>
    <alternativeName>
        <fullName>Outer kinetochore protein dad2</fullName>
    </alternativeName>
</protein>
<reference key="1">
    <citation type="journal article" date="2002" name="Nature">
        <title>The genome sequence of Schizosaccharomyces pombe.</title>
        <authorList>
            <person name="Wood V."/>
            <person name="Gwilliam R."/>
            <person name="Rajandream M.A."/>
            <person name="Lyne M.H."/>
            <person name="Lyne R."/>
            <person name="Stewart A."/>
            <person name="Sgouros J.G."/>
            <person name="Peat N."/>
            <person name="Hayles J."/>
            <person name="Baker S.G."/>
            <person name="Basham D."/>
            <person name="Bowman S."/>
            <person name="Brooks K."/>
            <person name="Brown D."/>
            <person name="Brown S."/>
            <person name="Chillingworth T."/>
            <person name="Churcher C.M."/>
            <person name="Collins M."/>
            <person name="Connor R."/>
            <person name="Cronin A."/>
            <person name="Davis P."/>
            <person name="Feltwell T."/>
            <person name="Fraser A."/>
            <person name="Gentles S."/>
            <person name="Goble A."/>
            <person name="Hamlin N."/>
            <person name="Harris D.E."/>
            <person name="Hidalgo J."/>
            <person name="Hodgson G."/>
            <person name="Holroyd S."/>
            <person name="Hornsby T."/>
            <person name="Howarth S."/>
            <person name="Huckle E.J."/>
            <person name="Hunt S."/>
            <person name="Jagels K."/>
            <person name="James K.D."/>
            <person name="Jones L."/>
            <person name="Jones M."/>
            <person name="Leather S."/>
            <person name="McDonald S."/>
            <person name="McLean J."/>
            <person name="Mooney P."/>
            <person name="Moule S."/>
            <person name="Mungall K.L."/>
            <person name="Murphy L.D."/>
            <person name="Niblett D."/>
            <person name="Odell C."/>
            <person name="Oliver K."/>
            <person name="O'Neil S."/>
            <person name="Pearson D."/>
            <person name="Quail M.A."/>
            <person name="Rabbinowitsch E."/>
            <person name="Rutherford K.M."/>
            <person name="Rutter S."/>
            <person name="Saunders D."/>
            <person name="Seeger K."/>
            <person name="Sharp S."/>
            <person name="Skelton J."/>
            <person name="Simmonds M.N."/>
            <person name="Squares R."/>
            <person name="Squares S."/>
            <person name="Stevens K."/>
            <person name="Taylor K."/>
            <person name="Taylor R.G."/>
            <person name="Tivey A."/>
            <person name="Walsh S.V."/>
            <person name="Warren T."/>
            <person name="Whitehead S."/>
            <person name="Woodward J.R."/>
            <person name="Volckaert G."/>
            <person name="Aert R."/>
            <person name="Robben J."/>
            <person name="Grymonprez B."/>
            <person name="Weltjens I."/>
            <person name="Vanstreels E."/>
            <person name="Rieger M."/>
            <person name="Schaefer M."/>
            <person name="Mueller-Auer S."/>
            <person name="Gabel C."/>
            <person name="Fuchs M."/>
            <person name="Duesterhoeft A."/>
            <person name="Fritzc C."/>
            <person name="Holzer E."/>
            <person name="Moestl D."/>
            <person name="Hilbert H."/>
            <person name="Borzym K."/>
            <person name="Langer I."/>
            <person name="Beck A."/>
            <person name="Lehrach H."/>
            <person name="Reinhardt R."/>
            <person name="Pohl T.M."/>
            <person name="Eger P."/>
            <person name="Zimmermann W."/>
            <person name="Wedler H."/>
            <person name="Wambutt R."/>
            <person name="Purnelle B."/>
            <person name="Goffeau A."/>
            <person name="Cadieu E."/>
            <person name="Dreano S."/>
            <person name="Gloux S."/>
            <person name="Lelaure V."/>
            <person name="Mottier S."/>
            <person name="Galibert F."/>
            <person name="Aves S.J."/>
            <person name="Xiang Z."/>
            <person name="Hunt C."/>
            <person name="Moore K."/>
            <person name="Hurst S.M."/>
            <person name="Lucas M."/>
            <person name="Rochet M."/>
            <person name="Gaillardin C."/>
            <person name="Tallada V.A."/>
            <person name="Garzon A."/>
            <person name="Thode G."/>
            <person name="Daga R.R."/>
            <person name="Cruzado L."/>
            <person name="Jimenez J."/>
            <person name="Sanchez M."/>
            <person name="del Rey F."/>
            <person name="Benito J."/>
            <person name="Dominguez A."/>
            <person name="Revuelta J.L."/>
            <person name="Moreno S."/>
            <person name="Armstrong J."/>
            <person name="Forsburg S.L."/>
            <person name="Cerutti L."/>
            <person name="Lowe T."/>
            <person name="McCombie W.R."/>
            <person name="Paulsen I."/>
            <person name="Potashkin J."/>
            <person name="Shpakovski G.V."/>
            <person name="Ussery D."/>
            <person name="Barrell B.G."/>
            <person name="Nurse P."/>
        </authorList>
    </citation>
    <scope>NUCLEOTIDE SEQUENCE [LARGE SCALE GENOMIC DNA]</scope>
    <source>
        <strain>972 / ATCC 24843</strain>
    </source>
</reference>
<reference key="2">
    <citation type="journal article" date="2000" name="Biosci. Biotechnol. Biochem.">
        <title>Identification and characterization of a novel gene, hos2+, the function of which is necessary for growth under high osmotic stress in fission yeast.</title>
        <authorList>
            <person name="Nakamichi N."/>
            <person name="Yamamoto E."/>
            <person name="Yamada H."/>
            <person name="Aiba H."/>
            <person name="Mizuno T."/>
        </authorList>
    </citation>
    <scope>DISRUPTION PHENOTYPE</scope>
</reference>
<reference key="3">
    <citation type="journal article" date="2005" name="EMBO J.">
        <title>Molecular analysis of kinetochore architecture in fission yeast.</title>
        <authorList>
            <person name="Liu X."/>
            <person name="McLeod I."/>
            <person name="Anderson S."/>
            <person name="Yates J.R. III"/>
            <person name="He X."/>
        </authorList>
    </citation>
    <scope>FUNCTION</scope>
    <scope>IDENTIFICATION IN THE DASH COMPLEX</scope>
    <scope>SUBCELLULAR LOCATION</scope>
</reference>
<reference key="4">
    <citation type="journal article" date="2007" name="Genes Cells">
        <title>The fission yeast DASH complex is essential for satisfying the spindle assembly checkpoint induced by defects in the inner-kinetochore proteins.</title>
        <authorList>
            <person name="Kobayashi Y."/>
            <person name="Saitoh S."/>
            <person name="Ogiyama Y."/>
            <person name="Soejima S."/>
            <person name="Takahashi K."/>
        </authorList>
    </citation>
    <scope>FUNCTION</scope>
    <scope>SUBCELLULAR LOCATION</scope>
    <scope>DISRUPTION PHENOTYPE</scope>
</reference>
<reference key="5">
    <citation type="journal article" date="2008" name="Mol. Biol. Cell">
        <title>Sister kinetochore recapture in fission yeast occurs by two distinct mechanisms, both requiring Dam1 and Klp2.</title>
        <authorList>
            <person name="Gachet Y."/>
            <person name="Reyes C."/>
            <person name="Courtheoux T."/>
            <person name="Goldstone S."/>
            <person name="Gay G."/>
            <person name="Serrurier C."/>
            <person name="Tournier S."/>
        </authorList>
    </citation>
    <scope>FUNCTION</scope>
</reference>
<reference key="6">
    <citation type="journal article" date="2010" name="Proc. Natl. Acad. Sci. U.S.A.">
        <title>A non-ring-like form of the Dam1 complex modulates microtubule dynamics in fission yeast.</title>
        <authorList>
            <person name="Gao Q."/>
            <person name="Courtheoux T."/>
            <person name="Gachet Y."/>
            <person name="Tournier S."/>
            <person name="He X."/>
        </authorList>
    </citation>
    <scope>FUNCTION</scope>
    <scope>SUBUNIT</scope>
    <scope>SUBCELLULAR LOCATION</scope>
    <scope>DISRUPTION PHENOTYPE</scope>
</reference>
<feature type="chain" id="PRO_0000211596" description="DASH complex subunit dad2">
    <location>
        <begin position="1"/>
        <end position="94"/>
    </location>
</feature>
<feature type="region of interest" description="Disordered" evidence="3">
    <location>
        <begin position="72"/>
        <end position="94"/>
    </location>
</feature>
<feature type="coiled-coil region" evidence="2">
    <location>
        <begin position="18"/>
        <end position="38"/>
    </location>
</feature>
<feature type="compositionally biased region" description="Polar residues" evidence="3">
    <location>
        <begin position="76"/>
        <end position="87"/>
    </location>
</feature>
<accession>Q9UTG8</accession>
<keyword id="KW-0131">Cell cycle</keyword>
<keyword id="KW-0132">Cell division</keyword>
<keyword id="KW-0137">Centromere</keyword>
<keyword id="KW-0158">Chromosome</keyword>
<keyword id="KW-0159">Chromosome partition</keyword>
<keyword id="KW-0175">Coiled coil</keyword>
<keyword id="KW-0963">Cytoplasm</keyword>
<keyword id="KW-0206">Cytoskeleton</keyword>
<keyword id="KW-0995">Kinetochore</keyword>
<keyword id="KW-0493">Microtubule</keyword>
<keyword id="KW-0498">Mitosis</keyword>
<keyword id="KW-0539">Nucleus</keyword>
<keyword id="KW-1185">Reference proteome</keyword>
<comment type="function">
    <text evidence="5 6 7 8">Component of the DASH complex that connects microtubules with kinetochores and couples microtubule depolymerisation to chromosome movement; it is involved in retrieving kinetochores to the spindle poles before their re-orientation on the spindle in early mitosis and allows microtubule depolymerization to pull chromosomes apart and resist detachment during anaphase (PubMed:16079914, PubMed:20624975). Kinetochores, consisting of a centromere-associated inner segment and a microtubule-contacting outer segment, play a crucial role in chromosome segregation by mediating the physical connection between centromeric DNA and microtubules (PubMed:16079914, PubMed:17352737). Kinetochores also serve as an input point for the spindle assembly checkpoint, which delays anaphase until all chromosomes have bioriented on the mitotic spindle (PubMed:17352737). The DASH complex mediates bipolar kinetochore-microtubule attachments and facilitates the formation of additional interactions between outer kinetochore components and spindle microtubules (PubMed:16079914). During chromosome movement along the microtubule, it is required both for the sliding of kinetochores along the lateral side of the microtubule and also for microtubule end-on pulling on the kinetochore (PubMed:18256284). Modulates cytoplasmic microtubule dynamics by tracking the plus-end of shortening microtubules and slowing their depolymerization (PubMed:20624975).</text>
</comment>
<comment type="subunit">
    <text evidence="1 5 8">Component of the DASH complex consisting of ask1, dad1, dad2, dad3, dad4, dam1, duo1, dad5, spc19 and spc34, with a stoichiometry of one copy of each subunit per complex (PubMed:16079914). Multiple DASH complexes oligomerize to form a ring that encircles spindle microtubules and organizes the rod-like NDC80 complexes of the outer kinetochore (By similarity). DASH complex oligomerization strengthens microtubule attachments (By similarity). On cytoplasmic microtubules, DASH complexes appear to form patches instead of rings (PubMed:20624975).</text>
</comment>
<comment type="subcellular location">
    <subcellularLocation>
        <location evidence="5 6 8">Nucleus</location>
    </subcellularLocation>
    <subcellularLocation>
        <location evidence="5 6 8">Cytoplasm</location>
        <location evidence="5 6 8">Cytoskeleton</location>
        <location evidence="5 6 8">Spindle</location>
    </subcellularLocation>
    <subcellularLocation>
        <location evidence="5 6 8">Chromosome</location>
        <location evidence="5 6 8">Centromere</location>
        <location evidence="5 6 8">Kinetochore</location>
    </subcellularLocation>
    <subcellularLocation>
        <location evidence="11">Cytoplasm</location>
        <location evidence="11">Cytoskeleton</location>
    </subcellularLocation>
    <text evidence="5 11">Associates with the mitotic spindle and the kinetochore (PubMed:16079914). Kinetochore association occurs only during mitosis (PubMed:16079914). In the cytoskeleton, localizes to cortical microtubules (Probable).</text>
</comment>
<comment type="disruption phenotype">
    <text evidence="4 6 8">Condensed chromosomes with long mitotic spindles and without sister-chromatid separation (PubMed:17352737). Sensitive to cold, thiabendazole and osmotic stress (PubMed:11193425, PubMed:17352737, PubMed:20624975).</text>
</comment>
<comment type="similarity">
    <text evidence="10">Belongs to the DASH complex DAD2 family.</text>
</comment>
<sequence>MLQARIEEKQKEYELICKLRDSSNDMVQQIETLAAKLETLTDGSEAVATVLNNWPSIFESIQIASQHSGALVRIPPSTSNTNASATEQGDVEEV</sequence>
<proteinExistence type="evidence at protein level"/>
<gene>
    <name evidence="12" type="primary">dad2</name>
    <name evidence="9" type="synonym">hos2</name>
    <name evidence="12" type="ORF">SPAC1805.07c</name>
</gene>